<organism>
    <name type="scientific">Escherichia coli (strain ATCC 8739 / DSM 1576 / NBRC 3972 / NCIMB 8545 / WDCM 00012 / Crooks)</name>
    <dbReference type="NCBI Taxonomy" id="481805"/>
    <lineage>
        <taxon>Bacteria</taxon>
        <taxon>Pseudomonadati</taxon>
        <taxon>Pseudomonadota</taxon>
        <taxon>Gammaproteobacteria</taxon>
        <taxon>Enterobacterales</taxon>
        <taxon>Enterobacteriaceae</taxon>
        <taxon>Escherichia</taxon>
    </lineage>
</organism>
<protein>
    <recommendedName>
        <fullName>S-(hydroxymethyl)glutathione dehydrogenase</fullName>
        <ecNumber>1.1.1.284</ecNumber>
    </recommendedName>
    <alternativeName>
        <fullName>Alcohol dehydrogenase class-3</fullName>
        <ecNumber>1.1.1.1</ecNumber>
    </alternativeName>
    <alternativeName>
        <fullName>Alcohol dehydrogenase class-III</fullName>
    </alternativeName>
    <alternativeName>
        <fullName>Glutathione-dependent formaldehyde dehydrogenase</fullName>
        <shortName>FALDH</shortName>
        <shortName>FDH</shortName>
        <shortName>GSH-FDH</shortName>
        <ecNumber>1.1.1.-</ecNumber>
    </alternativeName>
</protein>
<dbReference type="EC" id="1.1.1.284"/>
<dbReference type="EC" id="1.1.1.1"/>
<dbReference type="EC" id="1.1.1.-"/>
<dbReference type="EMBL" id="CP000946">
    <property type="protein sequence ID" value="ACA78891.1"/>
    <property type="molecule type" value="Genomic_DNA"/>
</dbReference>
<dbReference type="RefSeq" id="WP_000842102.1">
    <property type="nucleotide sequence ID" value="NZ_MTFT01000010.1"/>
</dbReference>
<dbReference type="SMR" id="B1J085"/>
<dbReference type="GeneID" id="93777099"/>
<dbReference type="KEGG" id="ecl:EcolC_3269"/>
<dbReference type="HOGENOM" id="CLU_026673_14_0_6"/>
<dbReference type="GO" id="GO:0005829">
    <property type="term" value="C:cytosol"/>
    <property type="evidence" value="ECO:0007669"/>
    <property type="project" value="TreeGrafter"/>
</dbReference>
<dbReference type="GO" id="GO:0004022">
    <property type="term" value="F:alcohol dehydrogenase (NAD+) activity"/>
    <property type="evidence" value="ECO:0007669"/>
    <property type="project" value="UniProtKB-EC"/>
</dbReference>
<dbReference type="GO" id="GO:0106322">
    <property type="term" value="F:S-(hydroxymethyl)glutathione dehydrogenase (NAD+) activity"/>
    <property type="evidence" value="ECO:0007669"/>
    <property type="project" value="RHEA"/>
</dbReference>
<dbReference type="GO" id="GO:0106321">
    <property type="term" value="F:S-(hydroxymethyl)glutathione dehydrogenase (NADP+) activity"/>
    <property type="evidence" value="ECO:0007669"/>
    <property type="project" value="RHEA"/>
</dbReference>
<dbReference type="GO" id="GO:0080007">
    <property type="term" value="F:S-nitrosoglutathione reductase (NADH) activity"/>
    <property type="evidence" value="ECO:0007669"/>
    <property type="project" value="RHEA"/>
</dbReference>
<dbReference type="GO" id="GO:0008270">
    <property type="term" value="F:zinc ion binding"/>
    <property type="evidence" value="ECO:0007669"/>
    <property type="project" value="InterPro"/>
</dbReference>
<dbReference type="GO" id="GO:0046294">
    <property type="term" value="P:formaldehyde catabolic process"/>
    <property type="evidence" value="ECO:0007669"/>
    <property type="project" value="InterPro"/>
</dbReference>
<dbReference type="CDD" id="cd08300">
    <property type="entry name" value="alcohol_DH_class_III"/>
    <property type="match status" value="1"/>
</dbReference>
<dbReference type="FunFam" id="3.40.50.720:FF:000003">
    <property type="entry name" value="S-(hydroxymethyl)glutathione dehydrogenase"/>
    <property type="match status" value="1"/>
</dbReference>
<dbReference type="FunFam" id="3.90.180.10:FF:000001">
    <property type="entry name" value="S-(hydroxymethyl)glutathione dehydrogenase"/>
    <property type="match status" value="1"/>
</dbReference>
<dbReference type="Gene3D" id="3.90.180.10">
    <property type="entry name" value="Medium-chain alcohol dehydrogenases, catalytic domain"/>
    <property type="match status" value="1"/>
</dbReference>
<dbReference type="Gene3D" id="3.40.50.720">
    <property type="entry name" value="NAD(P)-binding Rossmann-like Domain"/>
    <property type="match status" value="1"/>
</dbReference>
<dbReference type="InterPro" id="IPR013149">
    <property type="entry name" value="ADH-like_C"/>
</dbReference>
<dbReference type="InterPro" id="IPR013154">
    <property type="entry name" value="ADH-like_N"/>
</dbReference>
<dbReference type="InterPro" id="IPR014183">
    <property type="entry name" value="ADH_3"/>
</dbReference>
<dbReference type="InterPro" id="IPR002328">
    <property type="entry name" value="ADH_Zn_CS"/>
</dbReference>
<dbReference type="InterPro" id="IPR011032">
    <property type="entry name" value="GroES-like_sf"/>
</dbReference>
<dbReference type="InterPro" id="IPR036291">
    <property type="entry name" value="NAD(P)-bd_dom_sf"/>
</dbReference>
<dbReference type="InterPro" id="IPR020843">
    <property type="entry name" value="PKS_ER"/>
</dbReference>
<dbReference type="NCBIfam" id="TIGR02818">
    <property type="entry name" value="adh_III_F_hyde"/>
    <property type="match status" value="1"/>
</dbReference>
<dbReference type="PANTHER" id="PTHR43880">
    <property type="entry name" value="ALCOHOL DEHYDROGENASE"/>
    <property type="match status" value="1"/>
</dbReference>
<dbReference type="PANTHER" id="PTHR43880:SF12">
    <property type="entry name" value="ALCOHOL DEHYDROGENASE CLASS-3"/>
    <property type="match status" value="1"/>
</dbReference>
<dbReference type="Pfam" id="PF08240">
    <property type="entry name" value="ADH_N"/>
    <property type="match status" value="1"/>
</dbReference>
<dbReference type="Pfam" id="PF00107">
    <property type="entry name" value="ADH_zinc_N"/>
    <property type="match status" value="1"/>
</dbReference>
<dbReference type="SMART" id="SM00829">
    <property type="entry name" value="PKS_ER"/>
    <property type="match status" value="1"/>
</dbReference>
<dbReference type="SUPFAM" id="SSF50129">
    <property type="entry name" value="GroES-like"/>
    <property type="match status" value="2"/>
</dbReference>
<dbReference type="SUPFAM" id="SSF51735">
    <property type="entry name" value="NAD(P)-binding Rossmann-fold domains"/>
    <property type="match status" value="1"/>
</dbReference>
<dbReference type="PROSITE" id="PS00059">
    <property type="entry name" value="ADH_ZINC"/>
    <property type="match status" value="1"/>
</dbReference>
<accession>B1J085</accession>
<gene>
    <name type="primary">frmA</name>
    <name type="ordered locus">EcolC_3269</name>
</gene>
<keyword id="KW-0963">Cytoplasm</keyword>
<keyword id="KW-0479">Metal-binding</keyword>
<keyword id="KW-0520">NAD</keyword>
<keyword id="KW-0560">Oxidoreductase</keyword>
<keyword id="KW-0862">Zinc</keyword>
<evidence type="ECO:0000250" key="1">
    <source>
        <dbReference type="UniProtKB" id="P11766"/>
    </source>
</evidence>
<evidence type="ECO:0000250" key="2">
    <source>
        <dbReference type="UniProtKB" id="P25437"/>
    </source>
</evidence>
<evidence type="ECO:0000305" key="3"/>
<name>FRMA_ECOLC</name>
<comment type="function">
    <text evidence="2">Has high formaldehyde dehydrogenase activity in the presence of glutathione and catalyzes the oxidation of normal alcohols in a reaction that is not GSH-dependent. In addition, hemithiolacetals other than those formed from GSH, including omega-thiol fatty acids, also are substrates. Also acts as a S-nitroso-glutathione reductase by catalyzing the NADH-dependent reduction of S-nitrosoglutathione.</text>
</comment>
<comment type="catalytic activity">
    <reaction evidence="2">
        <text>S-(hydroxymethyl)glutathione + NADP(+) = S-formylglutathione + NADPH + H(+)</text>
        <dbReference type="Rhea" id="RHEA:19981"/>
        <dbReference type="ChEBI" id="CHEBI:15378"/>
        <dbReference type="ChEBI" id="CHEBI:57688"/>
        <dbReference type="ChEBI" id="CHEBI:57783"/>
        <dbReference type="ChEBI" id="CHEBI:58349"/>
        <dbReference type="ChEBI" id="CHEBI:58758"/>
        <dbReference type="EC" id="1.1.1.284"/>
    </reaction>
</comment>
<comment type="catalytic activity">
    <reaction evidence="2">
        <text>S-(hydroxymethyl)glutathione + NAD(+) = S-formylglutathione + NADH + H(+)</text>
        <dbReference type="Rhea" id="RHEA:19985"/>
        <dbReference type="ChEBI" id="CHEBI:15378"/>
        <dbReference type="ChEBI" id="CHEBI:57540"/>
        <dbReference type="ChEBI" id="CHEBI:57688"/>
        <dbReference type="ChEBI" id="CHEBI:57945"/>
        <dbReference type="ChEBI" id="CHEBI:58758"/>
        <dbReference type="EC" id="1.1.1.284"/>
    </reaction>
</comment>
<comment type="catalytic activity">
    <reaction evidence="2">
        <text>a primary alcohol + NAD(+) = an aldehyde + NADH + H(+)</text>
        <dbReference type="Rhea" id="RHEA:10736"/>
        <dbReference type="ChEBI" id="CHEBI:15378"/>
        <dbReference type="ChEBI" id="CHEBI:15734"/>
        <dbReference type="ChEBI" id="CHEBI:17478"/>
        <dbReference type="ChEBI" id="CHEBI:57540"/>
        <dbReference type="ChEBI" id="CHEBI:57945"/>
        <dbReference type="EC" id="1.1.1.1"/>
    </reaction>
</comment>
<comment type="catalytic activity">
    <reaction evidence="2">
        <text>a secondary alcohol + NAD(+) = a ketone + NADH + H(+)</text>
        <dbReference type="Rhea" id="RHEA:10740"/>
        <dbReference type="ChEBI" id="CHEBI:15378"/>
        <dbReference type="ChEBI" id="CHEBI:17087"/>
        <dbReference type="ChEBI" id="CHEBI:35681"/>
        <dbReference type="ChEBI" id="CHEBI:57540"/>
        <dbReference type="ChEBI" id="CHEBI:57945"/>
        <dbReference type="EC" id="1.1.1.1"/>
    </reaction>
</comment>
<comment type="catalytic activity">
    <reaction evidence="2">
        <text>S-nitrosoglutathione + NADH + H(+) = S-(hydroxysulfenamide)glutathione + NAD(+)</text>
        <dbReference type="Rhea" id="RHEA:78371"/>
        <dbReference type="ChEBI" id="CHEBI:15378"/>
        <dbReference type="ChEBI" id="CHEBI:57540"/>
        <dbReference type="ChEBI" id="CHEBI:57945"/>
        <dbReference type="ChEBI" id="CHEBI:145544"/>
        <dbReference type="ChEBI" id="CHEBI:229723"/>
    </reaction>
    <physiologicalReaction direction="left-to-right" evidence="2">
        <dbReference type="Rhea" id="RHEA:78372"/>
    </physiologicalReaction>
</comment>
<comment type="cofactor">
    <cofactor evidence="1">
        <name>Zn(2+)</name>
        <dbReference type="ChEBI" id="CHEBI:29105"/>
    </cofactor>
    <text evidence="1">Binds 2 Zn(2+) ions per subunit.</text>
</comment>
<comment type="subunit">
    <text evidence="2">Homodimer.</text>
</comment>
<comment type="subcellular location">
    <subcellularLocation>
        <location evidence="2">Cytoplasm</location>
    </subcellularLocation>
</comment>
<comment type="similarity">
    <text evidence="3">Belongs to the zinc-containing alcohol dehydrogenase family. Class-III subfamily.</text>
</comment>
<feature type="chain" id="PRO_0000341283" description="S-(hydroxymethyl)glutathione dehydrogenase">
    <location>
        <begin position="1"/>
        <end position="369"/>
    </location>
</feature>
<feature type="binding site" evidence="1">
    <location>
        <position position="40"/>
    </location>
    <ligand>
        <name>Zn(2+)</name>
        <dbReference type="ChEBI" id="CHEBI:29105"/>
        <label>1</label>
        <note>catalytic</note>
    </ligand>
</feature>
<feature type="binding site" evidence="1">
    <location>
        <position position="62"/>
    </location>
    <ligand>
        <name>Zn(2+)</name>
        <dbReference type="ChEBI" id="CHEBI:29105"/>
        <label>1</label>
        <note>catalytic</note>
    </ligand>
</feature>
<feature type="binding site" evidence="1">
    <location>
        <position position="92"/>
    </location>
    <ligand>
        <name>Zn(2+)</name>
        <dbReference type="ChEBI" id="CHEBI:29105"/>
        <label>2</label>
    </ligand>
</feature>
<feature type="binding site" evidence="1">
    <location>
        <position position="95"/>
    </location>
    <ligand>
        <name>Zn(2+)</name>
        <dbReference type="ChEBI" id="CHEBI:29105"/>
        <label>2</label>
    </ligand>
</feature>
<feature type="binding site" evidence="1">
    <location>
        <position position="98"/>
    </location>
    <ligand>
        <name>Zn(2+)</name>
        <dbReference type="ChEBI" id="CHEBI:29105"/>
        <label>2</label>
    </ligand>
</feature>
<feature type="binding site" evidence="1">
    <location>
        <position position="106"/>
    </location>
    <ligand>
        <name>Zn(2+)</name>
        <dbReference type="ChEBI" id="CHEBI:29105"/>
        <label>2</label>
    </ligand>
</feature>
<feature type="binding site" evidence="1">
    <location>
        <position position="169"/>
    </location>
    <ligand>
        <name>Zn(2+)</name>
        <dbReference type="ChEBI" id="CHEBI:29105"/>
        <label>1</label>
        <note>catalytic</note>
    </ligand>
</feature>
<sequence length="369" mass="39333">MKSRAAVAFAPGKPLEIVEIDVAPPKKGEVLIKVTHTGVCHTDAFTLSGDDPEGVFPVVLGHEGAGVVVEVGEGVTSVKPGDHVIPLYTAECGECEFCRSGKTNLCVAVRETQGKGLMPDGTTRFSYNGQPLYHYMGCSTFSEYTVVAEVSLAKINPEANHEHVCLLGCGVTTGIGAVHNTAKVQPGDSVAVFGLGAIGLAVVQGARQAKAGRIIAIDTNPKKFDLARRFGATDCINPNDYDKPIKDVLLDINKWGIDHTFECIGNVNVMRAALESAHRGWGQSVIIGVAGSGQEISTRPFQLVTGRVWKGSAFGGVKGRSQLPGMVEDAMKGDIDLEPFVTHTMSLDEINDAFDLMHEGKSIRTVIRY</sequence>
<reference key="1">
    <citation type="submission" date="2008-02" db="EMBL/GenBank/DDBJ databases">
        <title>Complete sequence of Escherichia coli C str. ATCC 8739.</title>
        <authorList>
            <person name="Copeland A."/>
            <person name="Lucas S."/>
            <person name="Lapidus A."/>
            <person name="Glavina del Rio T."/>
            <person name="Dalin E."/>
            <person name="Tice H."/>
            <person name="Bruce D."/>
            <person name="Goodwin L."/>
            <person name="Pitluck S."/>
            <person name="Kiss H."/>
            <person name="Brettin T."/>
            <person name="Detter J.C."/>
            <person name="Han C."/>
            <person name="Kuske C.R."/>
            <person name="Schmutz J."/>
            <person name="Larimer F."/>
            <person name="Land M."/>
            <person name="Hauser L."/>
            <person name="Kyrpides N."/>
            <person name="Mikhailova N."/>
            <person name="Ingram L."/>
            <person name="Richardson P."/>
        </authorList>
    </citation>
    <scope>NUCLEOTIDE SEQUENCE [LARGE SCALE GENOMIC DNA]</scope>
    <source>
        <strain>ATCC 8739 / DSM 1576 / NBRC 3972 / NCIMB 8545 / WDCM 00012 / Crooks</strain>
    </source>
</reference>
<proteinExistence type="inferred from homology"/>